<organism>
    <name type="scientific">Corynebacterium diphtheriae (strain ATCC 700971 / NCTC 13129 / Biotype gravis)</name>
    <dbReference type="NCBI Taxonomy" id="257309"/>
    <lineage>
        <taxon>Bacteria</taxon>
        <taxon>Bacillati</taxon>
        <taxon>Actinomycetota</taxon>
        <taxon>Actinomycetes</taxon>
        <taxon>Mycobacteriales</taxon>
        <taxon>Corynebacteriaceae</taxon>
        <taxon>Corynebacterium</taxon>
    </lineage>
</organism>
<feature type="chain" id="PRO_0000115421" description="Small ribosomal subunit protein uS15">
    <location>
        <begin position="1"/>
        <end position="89"/>
    </location>
</feature>
<evidence type="ECO:0000255" key="1">
    <source>
        <dbReference type="HAMAP-Rule" id="MF_01343"/>
    </source>
</evidence>
<evidence type="ECO:0000305" key="2"/>
<gene>
    <name evidence="1" type="primary">rpsO</name>
    <name type="ordered locus">DIP1468</name>
</gene>
<proteinExistence type="inferred from homology"/>
<accession>Q6NGP0</accession>
<sequence>MALSTEQKKSILAEYGLHETDTGSPEAQVALLSARINQLTEHLKFHKHDHHSRRGLLLLVGRRKGLLKYLADNNVDRYRDLIARLGLRR</sequence>
<keyword id="KW-1185">Reference proteome</keyword>
<keyword id="KW-0687">Ribonucleoprotein</keyword>
<keyword id="KW-0689">Ribosomal protein</keyword>
<keyword id="KW-0694">RNA-binding</keyword>
<keyword id="KW-0699">rRNA-binding</keyword>
<comment type="function">
    <text evidence="1">One of the primary rRNA binding proteins, it binds directly to 16S rRNA where it helps nucleate assembly of the platform of the 30S subunit by binding and bridging several RNA helices of the 16S rRNA.</text>
</comment>
<comment type="function">
    <text evidence="1">Forms an intersubunit bridge (bridge B4) with the 23S rRNA of the 50S subunit in the ribosome.</text>
</comment>
<comment type="subunit">
    <text evidence="1">Part of the 30S ribosomal subunit. Forms a bridge to the 50S subunit in the 70S ribosome, contacting the 23S rRNA.</text>
</comment>
<comment type="similarity">
    <text evidence="1">Belongs to the universal ribosomal protein uS15 family.</text>
</comment>
<reference key="1">
    <citation type="journal article" date="2003" name="Nucleic Acids Res.">
        <title>The complete genome sequence and analysis of Corynebacterium diphtheriae NCTC13129.</title>
        <authorList>
            <person name="Cerdeno-Tarraga A.-M."/>
            <person name="Efstratiou A."/>
            <person name="Dover L.G."/>
            <person name="Holden M.T.G."/>
            <person name="Pallen M.J."/>
            <person name="Bentley S.D."/>
            <person name="Besra G.S."/>
            <person name="Churcher C.M."/>
            <person name="James K.D."/>
            <person name="De Zoysa A."/>
            <person name="Chillingworth T."/>
            <person name="Cronin A."/>
            <person name="Dowd L."/>
            <person name="Feltwell T."/>
            <person name="Hamlin N."/>
            <person name="Holroyd S."/>
            <person name="Jagels K."/>
            <person name="Moule S."/>
            <person name="Quail M.A."/>
            <person name="Rabbinowitsch E."/>
            <person name="Rutherford K.M."/>
            <person name="Thomson N.R."/>
            <person name="Unwin L."/>
            <person name="Whitehead S."/>
            <person name="Barrell B.G."/>
            <person name="Parkhill J."/>
        </authorList>
    </citation>
    <scope>NUCLEOTIDE SEQUENCE [LARGE SCALE GENOMIC DNA]</scope>
    <source>
        <strain>ATCC 700971 / NCTC 13129 / Biotype gravis</strain>
    </source>
</reference>
<name>RS15_CORDI</name>
<dbReference type="EMBL" id="BX248358">
    <property type="protein sequence ID" value="CAE49996.1"/>
    <property type="molecule type" value="Genomic_DNA"/>
</dbReference>
<dbReference type="RefSeq" id="WP_003851911.1">
    <property type="nucleotide sequence ID" value="NC_002935.2"/>
</dbReference>
<dbReference type="SMR" id="Q6NGP0"/>
<dbReference type="STRING" id="257309.DIP1468"/>
<dbReference type="GeneID" id="29421233"/>
<dbReference type="KEGG" id="cdi:DIP1468"/>
<dbReference type="HOGENOM" id="CLU_148518_0_0_11"/>
<dbReference type="Proteomes" id="UP000002198">
    <property type="component" value="Chromosome"/>
</dbReference>
<dbReference type="GO" id="GO:0022627">
    <property type="term" value="C:cytosolic small ribosomal subunit"/>
    <property type="evidence" value="ECO:0007669"/>
    <property type="project" value="TreeGrafter"/>
</dbReference>
<dbReference type="GO" id="GO:0019843">
    <property type="term" value="F:rRNA binding"/>
    <property type="evidence" value="ECO:0007669"/>
    <property type="project" value="UniProtKB-UniRule"/>
</dbReference>
<dbReference type="GO" id="GO:0003735">
    <property type="term" value="F:structural constituent of ribosome"/>
    <property type="evidence" value="ECO:0007669"/>
    <property type="project" value="InterPro"/>
</dbReference>
<dbReference type="GO" id="GO:0006412">
    <property type="term" value="P:translation"/>
    <property type="evidence" value="ECO:0007669"/>
    <property type="project" value="UniProtKB-UniRule"/>
</dbReference>
<dbReference type="CDD" id="cd00353">
    <property type="entry name" value="Ribosomal_S15p_S13e"/>
    <property type="match status" value="1"/>
</dbReference>
<dbReference type="FunFam" id="1.10.287.10:FF:000002">
    <property type="entry name" value="30S ribosomal protein S15"/>
    <property type="match status" value="1"/>
</dbReference>
<dbReference type="Gene3D" id="6.10.250.3130">
    <property type="match status" value="1"/>
</dbReference>
<dbReference type="Gene3D" id="1.10.287.10">
    <property type="entry name" value="S15/NS1, RNA-binding"/>
    <property type="match status" value="1"/>
</dbReference>
<dbReference type="HAMAP" id="MF_01343_B">
    <property type="entry name" value="Ribosomal_uS15_B"/>
    <property type="match status" value="1"/>
</dbReference>
<dbReference type="InterPro" id="IPR000589">
    <property type="entry name" value="Ribosomal_uS15"/>
</dbReference>
<dbReference type="InterPro" id="IPR005290">
    <property type="entry name" value="Ribosomal_uS15_bac-type"/>
</dbReference>
<dbReference type="InterPro" id="IPR009068">
    <property type="entry name" value="uS15_NS1_RNA-bd_sf"/>
</dbReference>
<dbReference type="NCBIfam" id="TIGR00952">
    <property type="entry name" value="S15_bact"/>
    <property type="match status" value="1"/>
</dbReference>
<dbReference type="PANTHER" id="PTHR23321">
    <property type="entry name" value="RIBOSOMAL PROTEIN S15, BACTERIAL AND ORGANELLAR"/>
    <property type="match status" value="1"/>
</dbReference>
<dbReference type="PANTHER" id="PTHR23321:SF26">
    <property type="entry name" value="SMALL RIBOSOMAL SUBUNIT PROTEIN US15M"/>
    <property type="match status" value="1"/>
</dbReference>
<dbReference type="Pfam" id="PF00312">
    <property type="entry name" value="Ribosomal_S15"/>
    <property type="match status" value="1"/>
</dbReference>
<dbReference type="SMART" id="SM01387">
    <property type="entry name" value="Ribosomal_S15"/>
    <property type="match status" value="1"/>
</dbReference>
<dbReference type="SUPFAM" id="SSF47060">
    <property type="entry name" value="S15/NS1 RNA-binding domain"/>
    <property type="match status" value="1"/>
</dbReference>
<dbReference type="PROSITE" id="PS00362">
    <property type="entry name" value="RIBOSOMAL_S15"/>
    <property type="match status" value="1"/>
</dbReference>
<protein>
    <recommendedName>
        <fullName evidence="1">Small ribosomal subunit protein uS15</fullName>
    </recommendedName>
    <alternativeName>
        <fullName evidence="2">30S ribosomal protein S15</fullName>
    </alternativeName>
</protein>